<reference key="1">
    <citation type="journal article" date="1990" name="Nucleic Acids Res.">
        <title>Nucleotide sequence of a 3.46 kb region of maize chloroplast DNA containing the gene cluster rpoC2-rps2-atpI-atpH.</title>
        <authorList>
            <person name="Stahl D."/>
            <person name="Rodermel S."/>
            <person name="Subramanian A.R."/>
            <person name="Bogorad L."/>
        </authorList>
    </citation>
    <scope>NUCLEOTIDE SEQUENCE [GENOMIC DNA]</scope>
    <source>
        <strain>cv. FR9cms X FR37</strain>
        <tissue>Leaf</tissue>
    </source>
</reference>
<reference key="2">
    <citation type="journal article" date="1995" name="J. Mol. Biol.">
        <title>Complete sequence of the maize chloroplast genome: gene content, hotspots of divergence and fine tuning of genetic information by transcript editing.</title>
        <authorList>
            <person name="Maier R.M."/>
            <person name="Neckermann K."/>
            <person name="Igloi G.L."/>
            <person name="Koessel H."/>
        </authorList>
    </citation>
    <scope>NUCLEOTIDE SEQUENCE [LARGE SCALE GENOMIC DNA]</scope>
    <source>
        <strain>cv. B73</strain>
    </source>
</reference>
<organism>
    <name type="scientific">Zea mays</name>
    <name type="common">Maize</name>
    <dbReference type="NCBI Taxonomy" id="4577"/>
    <lineage>
        <taxon>Eukaryota</taxon>
        <taxon>Viridiplantae</taxon>
        <taxon>Streptophyta</taxon>
        <taxon>Embryophyta</taxon>
        <taxon>Tracheophyta</taxon>
        <taxon>Spermatophyta</taxon>
        <taxon>Magnoliopsida</taxon>
        <taxon>Liliopsida</taxon>
        <taxon>Poales</taxon>
        <taxon>Poaceae</taxon>
        <taxon>PACMAD clade</taxon>
        <taxon>Panicoideae</taxon>
        <taxon>Andropogonodae</taxon>
        <taxon>Andropogoneae</taxon>
        <taxon>Tripsacinae</taxon>
        <taxon>Zea</taxon>
    </lineage>
</organism>
<comment type="function">
    <text evidence="1">Key component of the proton channel; it plays a direct role in the translocation of protons across the membrane.</text>
</comment>
<comment type="subunit">
    <text evidence="1">F-type ATPases have 2 components, CF(1) - the catalytic core - and CF(0) - the membrane proton channel. CF(1) has five subunits: alpha(3), beta(3), gamma(1), delta(1), epsilon(1). CF(0) has four main subunits: a, b, b' and c.</text>
</comment>
<comment type="subcellular location">
    <subcellularLocation>
        <location evidence="1">Plastid</location>
        <location evidence="1">Chloroplast thylakoid membrane</location>
        <topology evidence="1">Multi-pass membrane protein</topology>
    </subcellularLocation>
</comment>
<comment type="similarity">
    <text evidence="1">Belongs to the ATPase A chain family.</text>
</comment>
<gene>
    <name evidence="1" type="primary">atpI</name>
</gene>
<protein>
    <recommendedName>
        <fullName evidence="1">ATP synthase subunit a, chloroplastic</fullName>
    </recommendedName>
    <alternativeName>
        <fullName evidence="1">ATP synthase F0 sector subunit a</fullName>
    </alternativeName>
    <alternativeName>
        <fullName evidence="1">F-ATPase subunit IV</fullName>
    </alternativeName>
</protein>
<proteinExistence type="inferred from homology"/>
<keyword id="KW-0066">ATP synthesis</keyword>
<keyword id="KW-0138">CF(0)</keyword>
<keyword id="KW-0150">Chloroplast</keyword>
<keyword id="KW-0375">Hydrogen ion transport</keyword>
<keyword id="KW-0406">Ion transport</keyword>
<keyword id="KW-0472">Membrane</keyword>
<keyword id="KW-0934">Plastid</keyword>
<keyword id="KW-1185">Reference proteome</keyword>
<keyword id="KW-0793">Thylakoid</keyword>
<keyword id="KW-0812">Transmembrane</keyword>
<keyword id="KW-1133">Transmembrane helix</keyword>
<keyword id="KW-0813">Transport</keyword>
<feature type="chain" id="PRO_0000002587" description="ATP synthase subunit a, chloroplastic">
    <location>
        <begin position="1"/>
        <end position="247"/>
    </location>
</feature>
<feature type="transmembrane region" description="Helical" evidence="1">
    <location>
        <begin position="38"/>
        <end position="58"/>
    </location>
</feature>
<feature type="transmembrane region" description="Helical" evidence="1">
    <location>
        <begin position="95"/>
        <end position="115"/>
    </location>
</feature>
<feature type="transmembrane region" description="Helical" evidence="1">
    <location>
        <begin position="134"/>
        <end position="154"/>
    </location>
</feature>
<feature type="transmembrane region" description="Helical" evidence="1">
    <location>
        <begin position="199"/>
        <end position="219"/>
    </location>
</feature>
<feature type="transmembrane region" description="Helical" evidence="1">
    <location>
        <begin position="220"/>
        <end position="240"/>
    </location>
</feature>
<accession>P17344</accession>
<dbReference type="EMBL" id="X52270">
    <property type="protein sequence ID" value="CAA36513.1"/>
    <property type="molecule type" value="Genomic_DNA"/>
</dbReference>
<dbReference type="EMBL" id="X86563">
    <property type="protein sequence ID" value="CAA60280.1"/>
    <property type="molecule type" value="Genomic_DNA"/>
</dbReference>
<dbReference type="PIR" id="S10174">
    <property type="entry name" value="S10174"/>
</dbReference>
<dbReference type="RefSeq" id="NP_043019.1">
    <property type="nucleotide sequence ID" value="NC_001666.2"/>
</dbReference>
<dbReference type="SMR" id="P17344"/>
<dbReference type="FunCoup" id="P17344">
    <property type="interactions" value="293"/>
</dbReference>
<dbReference type="STRING" id="4577.P17344"/>
<dbReference type="PaxDb" id="4577-GRMZM5G875287_P01"/>
<dbReference type="EnsemblPlants" id="Zm00001eb435250_T001">
    <property type="protein sequence ID" value="Zm00001eb435250_P001"/>
    <property type="gene ID" value="Zm00001eb435250"/>
</dbReference>
<dbReference type="EnsemblPlants" id="Zm00001eb435460_T001">
    <property type="protein sequence ID" value="Zm00001eb435460_P001"/>
    <property type="gene ID" value="Zm00001eb435460"/>
</dbReference>
<dbReference type="EnsemblPlants" id="Zm00001eb435730_T001">
    <property type="protein sequence ID" value="Zm00001eb435730_P001"/>
    <property type="gene ID" value="Zm00001eb435730"/>
</dbReference>
<dbReference type="EnsemblPlants" id="Zm00001eb436810_T001">
    <property type="protein sequence ID" value="Zm00001eb436810_P001"/>
    <property type="gene ID" value="Zm00001eb436810"/>
</dbReference>
<dbReference type="EnsemblPlants" id="Zm00001eb437240_T001">
    <property type="protein sequence ID" value="Zm00001eb437240_P001"/>
    <property type="gene ID" value="Zm00001eb437240"/>
</dbReference>
<dbReference type="EnsemblPlants" id="Zm00001eb438330_T001">
    <property type="protein sequence ID" value="Zm00001eb438330_P001"/>
    <property type="gene ID" value="Zm00001eb438330"/>
</dbReference>
<dbReference type="EnsemblPlants" id="Zm00001eb441010_T001">
    <property type="protein sequence ID" value="Zm00001eb441010_P001"/>
    <property type="gene ID" value="Zm00001eb441010"/>
</dbReference>
<dbReference type="EnsemblPlants" id="Zm00001eb442740_T001">
    <property type="protein sequence ID" value="Zm00001eb442740_P001"/>
    <property type="gene ID" value="Zm00001eb442740"/>
</dbReference>
<dbReference type="GeneID" id="845174"/>
<dbReference type="Gramene" id="Zm00001eb435250_T001">
    <property type="protein sequence ID" value="Zm00001eb435250_P001"/>
    <property type="gene ID" value="Zm00001eb435250"/>
</dbReference>
<dbReference type="Gramene" id="Zm00001eb435460_T001">
    <property type="protein sequence ID" value="Zm00001eb435460_P001"/>
    <property type="gene ID" value="Zm00001eb435460"/>
</dbReference>
<dbReference type="Gramene" id="Zm00001eb435730_T001">
    <property type="protein sequence ID" value="Zm00001eb435730_P001"/>
    <property type="gene ID" value="Zm00001eb435730"/>
</dbReference>
<dbReference type="Gramene" id="Zm00001eb436810_T001">
    <property type="protein sequence ID" value="Zm00001eb436810_P001"/>
    <property type="gene ID" value="Zm00001eb436810"/>
</dbReference>
<dbReference type="Gramene" id="Zm00001eb437240_T001">
    <property type="protein sequence ID" value="Zm00001eb437240_P001"/>
    <property type="gene ID" value="Zm00001eb437240"/>
</dbReference>
<dbReference type="Gramene" id="Zm00001eb438330_T001">
    <property type="protein sequence ID" value="Zm00001eb438330_P001"/>
    <property type="gene ID" value="Zm00001eb438330"/>
</dbReference>
<dbReference type="Gramene" id="Zm00001eb441010_T001">
    <property type="protein sequence ID" value="Zm00001eb441010_P001"/>
    <property type="gene ID" value="Zm00001eb441010"/>
</dbReference>
<dbReference type="Gramene" id="Zm00001eb442740_T001">
    <property type="protein sequence ID" value="Zm00001eb442740_P001"/>
    <property type="gene ID" value="Zm00001eb442740"/>
</dbReference>
<dbReference type="KEGG" id="zma:845174"/>
<dbReference type="MaizeGDB" id="69212"/>
<dbReference type="eggNOG" id="KOG4665">
    <property type="taxonomic scope" value="Eukaryota"/>
</dbReference>
<dbReference type="HOGENOM" id="CLU_041018_2_4_1"/>
<dbReference type="InParanoid" id="P17344"/>
<dbReference type="OMA" id="GFFWAAF"/>
<dbReference type="OrthoDB" id="734380at2759"/>
<dbReference type="Proteomes" id="UP000007305">
    <property type="component" value="Chloroplast"/>
</dbReference>
<dbReference type="ExpressionAtlas" id="P17344">
    <property type="expression patterns" value="baseline and differential"/>
</dbReference>
<dbReference type="GO" id="GO:0009535">
    <property type="term" value="C:chloroplast thylakoid membrane"/>
    <property type="evidence" value="ECO:0007669"/>
    <property type="project" value="UniProtKB-SubCell"/>
</dbReference>
<dbReference type="GO" id="GO:0005886">
    <property type="term" value="C:plasma membrane"/>
    <property type="evidence" value="ECO:0007669"/>
    <property type="project" value="UniProtKB-UniRule"/>
</dbReference>
<dbReference type="GO" id="GO:0045259">
    <property type="term" value="C:proton-transporting ATP synthase complex"/>
    <property type="evidence" value="ECO:0007669"/>
    <property type="project" value="UniProtKB-KW"/>
</dbReference>
<dbReference type="GO" id="GO:0046933">
    <property type="term" value="F:proton-transporting ATP synthase activity, rotational mechanism"/>
    <property type="evidence" value="ECO:0007669"/>
    <property type="project" value="UniProtKB-UniRule"/>
</dbReference>
<dbReference type="CDD" id="cd00310">
    <property type="entry name" value="ATP-synt_Fo_a_6"/>
    <property type="match status" value="1"/>
</dbReference>
<dbReference type="FunFam" id="1.20.120.220:FF:000001">
    <property type="entry name" value="ATP synthase subunit a, chloroplastic"/>
    <property type="match status" value="1"/>
</dbReference>
<dbReference type="Gene3D" id="1.20.120.220">
    <property type="entry name" value="ATP synthase, F0 complex, subunit A"/>
    <property type="match status" value="1"/>
</dbReference>
<dbReference type="HAMAP" id="MF_01393">
    <property type="entry name" value="ATP_synth_a_bact"/>
    <property type="match status" value="1"/>
</dbReference>
<dbReference type="InterPro" id="IPR045082">
    <property type="entry name" value="ATP_syn_F0_a_bact/chloroplast"/>
</dbReference>
<dbReference type="InterPro" id="IPR000568">
    <property type="entry name" value="ATP_synth_F0_asu"/>
</dbReference>
<dbReference type="InterPro" id="IPR023011">
    <property type="entry name" value="ATP_synth_F0_asu_AS"/>
</dbReference>
<dbReference type="InterPro" id="IPR035908">
    <property type="entry name" value="F0_ATP_A_sf"/>
</dbReference>
<dbReference type="NCBIfam" id="TIGR01131">
    <property type="entry name" value="ATP_synt_6_or_A"/>
    <property type="match status" value="1"/>
</dbReference>
<dbReference type="PANTHER" id="PTHR42823">
    <property type="entry name" value="ATP SYNTHASE SUBUNIT A, CHLOROPLASTIC"/>
    <property type="match status" value="1"/>
</dbReference>
<dbReference type="PANTHER" id="PTHR42823:SF3">
    <property type="entry name" value="ATP SYNTHASE SUBUNIT A, CHLOROPLASTIC"/>
    <property type="match status" value="1"/>
</dbReference>
<dbReference type="Pfam" id="PF00119">
    <property type="entry name" value="ATP-synt_A"/>
    <property type="match status" value="1"/>
</dbReference>
<dbReference type="PRINTS" id="PR00123">
    <property type="entry name" value="ATPASEA"/>
</dbReference>
<dbReference type="SUPFAM" id="SSF81336">
    <property type="entry name" value="F1F0 ATP synthase subunit A"/>
    <property type="match status" value="1"/>
</dbReference>
<dbReference type="PROSITE" id="PS00449">
    <property type="entry name" value="ATPASE_A"/>
    <property type="match status" value="1"/>
</dbReference>
<evidence type="ECO:0000255" key="1">
    <source>
        <dbReference type="HAMAP-Rule" id="MF_01393"/>
    </source>
</evidence>
<sequence>MNITPCSIKTLKGLYDISGVEVGQHFYWQIGGFQIHAQVLITSWVVITILLGSVIIAVRNPQTIPTDGQNFFEYVLEFIRDLSKTQIGEEYGPWVPFIGTMFLFIFVSNWSGALLPWKIIELPHGELAAPTNDINTTVALALLTSAAYFYAGLSKKGLSYFEKYIKPTPILLPINILEDFTKPLSLSFRLFGNILADELVVVVLVSLVPLVVPIPVMFLGLFTSGIQALIFATLAAAYIGESMEGHH</sequence>
<geneLocation type="chloroplast"/>
<name>ATPI_MAIZE</name>